<organism>
    <name type="scientific">Pongo abelii</name>
    <name type="common">Sumatran orangutan</name>
    <name type="synonym">Pongo pygmaeus abelii</name>
    <dbReference type="NCBI Taxonomy" id="9601"/>
    <lineage>
        <taxon>Eukaryota</taxon>
        <taxon>Metazoa</taxon>
        <taxon>Chordata</taxon>
        <taxon>Craniata</taxon>
        <taxon>Vertebrata</taxon>
        <taxon>Euteleostomi</taxon>
        <taxon>Mammalia</taxon>
        <taxon>Eutheria</taxon>
        <taxon>Euarchontoglires</taxon>
        <taxon>Primates</taxon>
        <taxon>Haplorrhini</taxon>
        <taxon>Catarrhini</taxon>
        <taxon>Hominidae</taxon>
        <taxon>Pongo</taxon>
    </lineage>
</organism>
<gene>
    <name type="primary">GRAMD2B</name>
    <name type="synonym">GRAMD3</name>
</gene>
<name>GRM2B_PONAB</name>
<accession>Q5R8N8</accession>
<protein>
    <recommendedName>
        <fullName>GRAM domain-containing protein 2B</fullName>
    </recommendedName>
    <alternativeName>
        <fullName>GRAM domain-containing protein 3</fullName>
    </alternativeName>
</protein>
<sequence length="446" mass="49306">MVKKRLPSNDTVFRFETPGSPRKANVEASRSSTDSPSSVFFSSEAENGVEEKKKACRSPTAQSPTPSVEAESPDQKKIISLRSKSSFDGASLASDKNDCKTESKNDPKTERKKSSSSSQYKANMHFHKLFLSVPTEEPLKQSFTCALQKEILYQGKLFVSENWICFHSKVFGKDTKISIPAFSVTLIKKTKTALLVPNALIIATVTDRYIFVSLLSRDSTYKLLKSVCGHLENTSVGNSPNPSSAENSFRADRPSSLPLDFNDEFSDLDGVVQQRRQDMEGYSSSGSQTPESENSRDFHVTESQTVLNVSKGEAKPTRADAHVNRVPEGKAKSLPAQGLSETVGILHKVKSQKCPMLHHILIFYAIVVCALIISTFYMRYRINTLEEQLGLLTSIVDTHNTEQAAPSGLGSQVQFNVEVLCQELTANIVKLEKIQNNLQKLLENGD</sequence>
<proteinExistence type="evidence at transcript level"/>
<dbReference type="EMBL" id="CR859713">
    <property type="protein sequence ID" value="CAH91872.1"/>
    <property type="molecule type" value="mRNA"/>
</dbReference>
<dbReference type="RefSeq" id="NP_001126085.1">
    <property type="nucleotide sequence ID" value="NM_001132613.1"/>
</dbReference>
<dbReference type="SMR" id="Q5R8N8"/>
<dbReference type="STRING" id="9601.ENSPPYP00000017586"/>
<dbReference type="GeneID" id="100173038"/>
<dbReference type="KEGG" id="pon:100173038"/>
<dbReference type="CTD" id="65983"/>
<dbReference type="eggNOG" id="KOG1032">
    <property type="taxonomic scope" value="Eukaryota"/>
</dbReference>
<dbReference type="InParanoid" id="Q5R8N8"/>
<dbReference type="OrthoDB" id="74360at2759"/>
<dbReference type="Proteomes" id="UP000001595">
    <property type="component" value="Unplaced"/>
</dbReference>
<dbReference type="GO" id="GO:0005881">
    <property type="term" value="C:cytoplasmic microtubule"/>
    <property type="evidence" value="ECO:0000250"/>
    <property type="project" value="UniProtKB"/>
</dbReference>
<dbReference type="CDD" id="cd13220">
    <property type="entry name" value="PH-GRAM_GRAMDC"/>
    <property type="match status" value="1"/>
</dbReference>
<dbReference type="FunFam" id="2.30.29.30:FF:000086">
    <property type="entry name" value="GRAM domain-containing protein 2B isoform 2"/>
    <property type="match status" value="1"/>
</dbReference>
<dbReference type="Gene3D" id="2.30.29.30">
    <property type="entry name" value="Pleckstrin-homology domain (PH domain)/Phosphotyrosine-binding domain (PTB)"/>
    <property type="match status" value="1"/>
</dbReference>
<dbReference type="InterPro" id="IPR004182">
    <property type="entry name" value="GRAM"/>
</dbReference>
<dbReference type="InterPro" id="IPR052633">
    <property type="entry name" value="GRAM_domain_protein_2B"/>
</dbReference>
<dbReference type="InterPro" id="IPR011993">
    <property type="entry name" value="PH-like_dom_sf"/>
</dbReference>
<dbReference type="PANTHER" id="PTHR46645:SF2">
    <property type="entry name" value="GRAM DOMAIN-CONTAINING PROTEIN 2B"/>
    <property type="match status" value="1"/>
</dbReference>
<dbReference type="PANTHER" id="PTHR46645">
    <property type="entry name" value="GRAM DOMAIN-CONTAINING PROTEIN 2B-RELATED"/>
    <property type="match status" value="1"/>
</dbReference>
<dbReference type="Pfam" id="PF02893">
    <property type="entry name" value="GRAM"/>
    <property type="match status" value="1"/>
</dbReference>
<dbReference type="SMART" id="SM00568">
    <property type="entry name" value="GRAM"/>
    <property type="match status" value="1"/>
</dbReference>
<evidence type="ECO:0000250" key="1">
    <source>
        <dbReference type="UniProtKB" id="Q6PEM6"/>
    </source>
</evidence>
<evidence type="ECO:0000250" key="2">
    <source>
        <dbReference type="UniProtKB" id="Q96HH9"/>
    </source>
</evidence>
<evidence type="ECO:0000256" key="3">
    <source>
        <dbReference type="SAM" id="MobiDB-lite"/>
    </source>
</evidence>
<keyword id="KW-0007">Acetylation</keyword>
<keyword id="KW-0597">Phosphoprotein</keyword>
<keyword id="KW-1185">Reference proteome</keyword>
<reference key="1">
    <citation type="submission" date="2004-11" db="EMBL/GenBank/DDBJ databases">
        <authorList>
            <consortium name="The German cDNA consortium"/>
        </authorList>
    </citation>
    <scope>NUCLEOTIDE SEQUENCE [LARGE SCALE MRNA]</scope>
    <source>
        <tissue>Kidney</tissue>
    </source>
</reference>
<feature type="chain" id="PRO_0000087579" description="GRAM domain-containing protein 2B">
    <location>
        <begin position="1"/>
        <end position="446"/>
    </location>
</feature>
<feature type="domain" description="GRAM">
    <location>
        <begin position="124"/>
        <end position="191"/>
    </location>
</feature>
<feature type="region of interest" description="Disordered" evidence="3">
    <location>
        <begin position="1"/>
        <end position="120"/>
    </location>
</feature>
<feature type="region of interest" description="Disordered" evidence="3">
    <location>
        <begin position="234"/>
        <end position="253"/>
    </location>
</feature>
<feature type="region of interest" description="Disordered" evidence="3">
    <location>
        <begin position="276"/>
        <end position="298"/>
    </location>
</feature>
<feature type="compositionally biased region" description="Low complexity" evidence="3">
    <location>
        <begin position="29"/>
        <end position="43"/>
    </location>
</feature>
<feature type="compositionally biased region" description="Basic and acidic residues" evidence="3">
    <location>
        <begin position="95"/>
        <end position="113"/>
    </location>
</feature>
<feature type="compositionally biased region" description="Polar residues" evidence="3">
    <location>
        <begin position="234"/>
        <end position="247"/>
    </location>
</feature>
<feature type="compositionally biased region" description="Polar residues" evidence="3">
    <location>
        <begin position="282"/>
        <end position="292"/>
    </location>
</feature>
<feature type="modified residue" description="N-acetylmethionine" evidence="2">
    <location>
        <position position="1"/>
    </location>
</feature>
<feature type="modified residue" description="Phosphoserine" evidence="1">
    <location>
        <position position="239"/>
    </location>
</feature>
<feature type="modified residue" description="Phosphoserine" evidence="1">
    <location>
        <position position="256"/>
    </location>
</feature>
<feature type="modified residue" description="Phosphoserine" evidence="2">
    <location>
        <position position="266"/>
    </location>
</feature>